<comment type="disease">
    <text evidence="2">A chromosomal aberration involving MRTFB is found in 3 chondroid lipomas. Translocation t(11;16)(q13;p13) with MRTFB produces a ZFTA-MRTFB fusion protein (PubMed:20607705).</text>
</comment>
<comment type="disease">
    <text evidence="3">A chromosomal aberration involving RELA is found in more than two-thirds of supratentorial ependymomas. Translocation with RELA produces a ZFTA-RELA fusion protein. ZFTA-RELA translocations are potent oncogenes that probably transform neural stem cells by driving an aberrant NF-kappa-B transcription program (PubMed:24553141).</text>
</comment>
<comment type="sequence caution" evidence="4">
    <conflict type="miscellaneous discrepancy">
        <sequence resource="EMBL-CDS" id="BAE46893"/>
    </conflict>
    <text>Probable cloning artifact.</text>
</comment>
<proteinExistence type="evidence at protein level"/>
<dbReference type="EMBL" id="AP006289">
    <property type="status" value="NOT_ANNOTATED_CDS"/>
    <property type="molecule type" value="Genomic_DNA"/>
</dbReference>
<dbReference type="EMBL" id="AB231751">
    <property type="protein sequence ID" value="BAE46893.1"/>
    <property type="status" value="ALT_SEQ"/>
    <property type="molecule type" value="mRNA"/>
</dbReference>
<dbReference type="CCDS" id="CCDS44636.1"/>
<dbReference type="RefSeq" id="NP_001138408.1">
    <property type="nucleotide sequence ID" value="NM_001144936.2"/>
</dbReference>
<dbReference type="FunCoup" id="C9JLR9">
    <property type="interactions" value="178"/>
</dbReference>
<dbReference type="STRING" id="9606.ENSP00000482180"/>
<dbReference type="iPTMnet" id="C9JLR9"/>
<dbReference type="PhosphoSitePlus" id="C9JLR9"/>
<dbReference type="BioMuta" id="C11orf95"/>
<dbReference type="jPOST" id="C9JLR9"/>
<dbReference type="MassIVE" id="C9JLR9"/>
<dbReference type="PaxDb" id="9606-ENSP00000482180"/>
<dbReference type="PeptideAtlas" id="C9JLR9"/>
<dbReference type="ProteomicsDB" id="10741"/>
<dbReference type="Antibodypedia" id="72993">
    <property type="antibodies" value="48 antibodies from 12 providers"/>
</dbReference>
<dbReference type="Ensembl" id="ENST00000433688.2">
    <property type="protein sequence ID" value="ENSP00000482180.1"/>
    <property type="gene ID" value="ENSG00000188070.9"/>
</dbReference>
<dbReference type="GeneID" id="65998"/>
<dbReference type="KEGG" id="hsa:65998"/>
<dbReference type="MANE-Select" id="ENST00000433688.2">
    <property type="protein sequence ID" value="ENSP00000482180.1"/>
    <property type="RefSeq nucleotide sequence ID" value="NM_001144936.2"/>
    <property type="RefSeq protein sequence ID" value="NP_001138408.1"/>
</dbReference>
<dbReference type="UCSC" id="uc010rmv.3">
    <property type="organism name" value="human"/>
</dbReference>
<dbReference type="AGR" id="HGNC:28449"/>
<dbReference type="CTD" id="65998"/>
<dbReference type="DisGeNET" id="65998"/>
<dbReference type="GeneCards" id="ZFTA"/>
<dbReference type="HGNC" id="HGNC:28449">
    <property type="gene designation" value="ZFTA"/>
</dbReference>
<dbReference type="HPA" id="ENSG00000188070">
    <property type="expression patterns" value="Low tissue specificity"/>
</dbReference>
<dbReference type="MalaCards" id="ZFTA"/>
<dbReference type="MIM" id="615699">
    <property type="type" value="gene"/>
</dbReference>
<dbReference type="neXtProt" id="NX_C9JLR9"/>
<dbReference type="OpenTargets" id="ENSG00000188070"/>
<dbReference type="Orphanet" id="251636">
    <property type="disease" value="Ependymoma"/>
</dbReference>
<dbReference type="Orphanet" id="530792">
    <property type="disease" value="RELA fusion-positive ependymoma"/>
</dbReference>
<dbReference type="VEuPathDB" id="HostDB:ENSG00000188070"/>
<dbReference type="eggNOG" id="ENOG502QTI3">
    <property type="taxonomic scope" value="Eukaryota"/>
</dbReference>
<dbReference type="GeneTree" id="ENSGT00600000084617"/>
<dbReference type="HOGENOM" id="CLU_035783_0_0_1"/>
<dbReference type="InParanoid" id="C9JLR9"/>
<dbReference type="OMA" id="RWRMDYL"/>
<dbReference type="OrthoDB" id="9945249at2759"/>
<dbReference type="PAN-GO" id="C9JLR9">
    <property type="GO annotations" value="1 GO annotation based on evolutionary models"/>
</dbReference>
<dbReference type="PhylomeDB" id="C9JLR9"/>
<dbReference type="PathwayCommons" id="C9JLR9"/>
<dbReference type="BioGRID-ORCS" id="65998">
    <property type="hits" value="11 hits in 177 CRISPR screens"/>
</dbReference>
<dbReference type="ChiTaRS" id="C11orf95">
    <property type="organism name" value="human"/>
</dbReference>
<dbReference type="GenomeRNAi" id="65998"/>
<dbReference type="Pharos" id="C9JLR9">
    <property type="development level" value="Tdark"/>
</dbReference>
<dbReference type="PRO" id="PR:C9JLR9"/>
<dbReference type="Proteomes" id="UP000005640">
    <property type="component" value="Chromosome 11"/>
</dbReference>
<dbReference type="RNAct" id="C9JLR9">
    <property type="molecule type" value="protein"/>
</dbReference>
<dbReference type="Bgee" id="ENSG00000188070">
    <property type="expression patterns" value="Expressed in cortical plate and 182 other cell types or tissues"/>
</dbReference>
<dbReference type="ExpressionAtlas" id="C9JLR9">
    <property type="expression patterns" value="baseline and differential"/>
</dbReference>
<dbReference type="GO" id="GO:0005634">
    <property type="term" value="C:nucleus"/>
    <property type="evidence" value="ECO:0007669"/>
    <property type="project" value="Ensembl"/>
</dbReference>
<dbReference type="GO" id="GO:0045892">
    <property type="term" value="P:negative regulation of DNA-templated transcription"/>
    <property type="evidence" value="ECO:0000318"/>
    <property type="project" value="GO_Central"/>
</dbReference>
<dbReference type="InterPro" id="IPR040647">
    <property type="entry name" value="SPIN-DOC_Znf-C2H2"/>
</dbReference>
<dbReference type="InterPro" id="IPR013087">
    <property type="entry name" value="Znf_C2H2_type"/>
</dbReference>
<dbReference type="InterPro" id="IPR052675">
    <property type="entry name" value="ZnF_transloc-Spindlin_int"/>
</dbReference>
<dbReference type="PANTHER" id="PTHR34589">
    <property type="entry name" value="SIMILAR TO RIKEN CDNA 2700081O15"/>
    <property type="match status" value="1"/>
</dbReference>
<dbReference type="PANTHER" id="PTHR34589:SF2">
    <property type="entry name" value="ZINC FINGER TRANSLOCATION-ASSOCIATED PROTEIN"/>
    <property type="match status" value="1"/>
</dbReference>
<dbReference type="Pfam" id="PF18658">
    <property type="entry name" value="zf-C2H2_12"/>
    <property type="match status" value="4"/>
</dbReference>
<dbReference type="SMART" id="SM00355">
    <property type="entry name" value="ZnF_C2H2"/>
    <property type="match status" value="4"/>
</dbReference>
<reference key="1">
    <citation type="journal article" date="2006" name="Nature">
        <title>Human chromosome 11 DNA sequence and analysis including novel gene identification.</title>
        <authorList>
            <person name="Taylor T.D."/>
            <person name="Noguchi H."/>
            <person name="Totoki Y."/>
            <person name="Toyoda A."/>
            <person name="Kuroki Y."/>
            <person name="Dewar K."/>
            <person name="Lloyd C."/>
            <person name="Itoh T."/>
            <person name="Takeda T."/>
            <person name="Kim D.-W."/>
            <person name="She X."/>
            <person name="Barlow K.F."/>
            <person name="Bloom T."/>
            <person name="Bruford E."/>
            <person name="Chang J.L."/>
            <person name="Cuomo C.A."/>
            <person name="Eichler E."/>
            <person name="FitzGerald M.G."/>
            <person name="Jaffe D.B."/>
            <person name="LaButti K."/>
            <person name="Nicol R."/>
            <person name="Park H.-S."/>
            <person name="Seaman C."/>
            <person name="Sougnez C."/>
            <person name="Yang X."/>
            <person name="Zimmer A.R."/>
            <person name="Zody M.C."/>
            <person name="Birren B.W."/>
            <person name="Nusbaum C."/>
            <person name="Fujiyama A."/>
            <person name="Hattori M."/>
            <person name="Rogers J."/>
            <person name="Lander E.S."/>
            <person name="Sakaki Y."/>
        </authorList>
    </citation>
    <scope>NUCLEOTIDE SEQUENCE [LARGE SCALE GENOMIC DNA]</scope>
</reference>
<reference key="2">
    <citation type="submission" date="2005-08" db="EMBL/GenBank/DDBJ databases">
        <title>Identification of novel human genes predicted by combining multiple gene-finders.</title>
        <authorList>
            <person name="Totoki Y."/>
            <person name="Yada T."/>
            <person name="Sakaki Y."/>
            <person name="Takeda T."/>
        </authorList>
    </citation>
    <scope>NUCLEOTIDE SEQUENCE [MRNA] OF 162-538</scope>
</reference>
<reference key="3">
    <citation type="journal article" date="2010" name="Genes Chromosomes Cancer">
        <title>C11orf95-MKL2 is the resulting fusion oncogene of t(11;16)(q13;p13) in chondroid lipoma.</title>
        <authorList>
            <person name="Huang D."/>
            <person name="Sumegi J."/>
            <person name="Dal Cin P."/>
            <person name="Reith J.D."/>
            <person name="Yasuda T."/>
            <person name="Nelson M."/>
            <person name="Muirhead D."/>
            <person name="Bridge J.A."/>
        </authorList>
    </citation>
    <scope>CHROMOSOMAL TRANSLOCATION WITH MRTFB</scope>
</reference>
<reference key="4">
    <citation type="journal article" date="2014" name="Nature">
        <title>C11orf95-RELA fusions drive oncogenic NF-kappaB signalling in ependymoma.</title>
        <authorList>
            <person name="Parker M."/>
            <person name="Mohankumar K.M."/>
            <person name="Punchihewa C."/>
            <person name="Weinlich R."/>
            <person name="Dalton J.D."/>
            <person name="Li Y."/>
            <person name="Lee R."/>
            <person name="Tatevossian R.G."/>
            <person name="Phoenix T.N."/>
            <person name="Thiruvenkatam R."/>
            <person name="White E."/>
            <person name="Tang B."/>
            <person name="Orisme W."/>
            <person name="Gupta K."/>
            <person name="Rusch M."/>
            <person name="Chen X."/>
            <person name="Li Y."/>
            <person name="Nagahawhatte P."/>
            <person name="Hedlund E."/>
            <person name="Finkelstein D."/>
            <person name="Wu G."/>
            <person name="Shurtleff S."/>
            <person name="Easton J."/>
            <person name="Boggs K."/>
            <person name="Yergeau D."/>
            <person name="Vadodaria B."/>
            <person name="Mulder H.L."/>
            <person name="Becksfort J."/>
            <person name="Becksford J."/>
            <person name="Gupta P."/>
            <person name="Huether R."/>
            <person name="Ma J."/>
            <person name="Song G."/>
            <person name="Gajjar A."/>
            <person name="Merchant T."/>
            <person name="Boop F."/>
            <person name="Smith A.A."/>
            <person name="Ding L."/>
            <person name="Lu C."/>
            <person name="Ochoa K."/>
            <person name="Zhao D."/>
            <person name="Fulton R.S."/>
            <person name="Fulton L.L."/>
            <person name="Mardis E.R."/>
            <person name="Wilson R.K."/>
            <person name="Downing J.R."/>
            <person name="Green D.R."/>
            <person name="Zhang J."/>
            <person name="Ellison D.W."/>
            <person name="Gilbertson R.J."/>
        </authorList>
    </citation>
    <scope>CHROMOSOMAL TRANSLOCATION WITH RELA</scope>
</reference>
<reference key="5">
    <citation type="journal article" date="2017" name="Nat. Struct. Mol. Biol.">
        <title>Site-specific mapping of the human SUMO proteome reveals co-modification with phosphorylation.</title>
        <authorList>
            <person name="Hendriks I.A."/>
            <person name="Lyon D."/>
            <person name="Young C."/>
            <person name="Jensen L.J."/>
            <person name="Vertegaal A.C."/>
            <person name="Nielsen M.L."/>
        </authorList>
    </citation>
    <scope>SUMOYLATION [LARGE SCALE ANALYSIS] AT LYS-375</scope>
    <scope>IDENTIFICATION BY MASS SPECTROMETRY [LARGE SCALE ANALYSIS]</scope>
</reference>
<organism>
    <name type="scientific">Homo sapiens</name>
    <name type="common">Human</name>
    <dbReference type="NCBI Taxonomy" id="9606"/>
    <lineage>
        <taxon>Eukaryota</taxon>
        <taxon>Metazoa</taxon>
        <taxon>Chordata</taxon>
        <taxon>Craniata</taxon>
        <taxon>Vertebrata</taxon>
        <taxon>Euteleostomi</taxon>
        <taxon>Mammalia</taxon>
        <taxon>Eutheria</taxon>
        <taxon>Euarchontoglires</taxon>
        <taxon>Primates</taxon>
        <taxon>Haplorrhini</taxon>
        <taxon>Catarrhini</taxon>
        <taxon>Hominidae</taxon>
        <taxon>Homo</taxon>
    </lineage>
</organism>
<feature type="chain" id="PRO_0000393909" description="Zinc finger translocation-associated protein">
    <location>
        <begin position="1"/>
        <end position="678"/>
    </location>
</feature>
<feature type="region of interest" description="Disordered" evidence="1">
    <location>
        <begin position="1"/>
        <end position="100"/>
    </location>
</feature>
<feature type="region of interest" description="Disordered" evidence="1">
    <location>
        <begin position="182"/>
        <end position="250"/>
    </location>
</feature>
<feature type="region of interest" description="Disordered" evidence="1">
    <location>
        <begin position="329"/>
        <end position="417"/>
    </location>
</feature>
<feature type="region of interest" description="Disordered" evidence="1">
    <location>
        <begin position="490"/>
        <end position="583"/>
    </location>
</feature>
<feature type="compositionally biased region" description="Low complexity" evidence="1">
    <location>
        <begin position="62"/>
        <end position="78"/>
    </location>
</feature>
<feature type="compositionally biased region" description="Basic and acidic residues" evidence="1">
    <location>
        <begin position="79"/>
        <end position="88"/>
    </location>
</feature>
<feature type="compositionally biased region" description="Acidic residues" evidence="1">
    <location>
        <begin position="187"/>
        <end position="201"/>
    </location>
</feature>
<feature type="compositionally biased region" description="Acidic residues" evidence="1">
    <location>
        <begin position="388"/>
        <end position="398"/>
    </location>
</feature>
<feature type="compositionally biased region" description="Pro residues" evidence="1">
    <location>
        <begin position="492"/>
        <end position="504"/>
    </location>
</feature>
<feature type="compositionally biased region" description="Acidic residues" evidence="1">
    <location>
        <begin position="513"/>
        <end position="529"/>
    </location>
</feature>
<feature type="compositionally biased region" description="Acidic residues" evidence="1">
    <location>
        <begin position="543"/>
        <end position="553"/>
    </location>
</feature>
<feature type="compositionally biased region" description="Pro residues" evidence="1">
    <location>
        <begin position="560"/>
        <end position="572"/>
    </location>
</feature>
<feature type="compositionally biased region" description="Basic and acidic residues" evidence="1">
    <location>
        <begin position="573"/>
        <end position="583"/>
    </location>
</feature>
<feature type="site" description="Breakpoint for translocation to form ZFTA-MLK2 fusion protein">
    <location>
        <position position="138"/>
    </location>
</feature>
<feature type="cross-link" description="Glycyl lysine isopeptide (Lys-Gly) (interchain with G-Cter in SUMO2)" evidence="6">
    <location>
        <position position="375"/>
    </location>
</feature>
<name>ZFTA_HUMAN</name>
<accession>C9JLR9</accession>
<accession>A6NLS7</accession>
<accession>Q3C1V4</accession>
<evidence type="ECO:0000256" key="1">
    <source>
        <dbReference type="SAM" id="MobiDB-lite"/>
    </source>
</evidence>
<evidence type="ECO:0000269" key="2">
    <source>
    </source>
</evidence>
<evidence type="ECO:0000269" key="3">
    <source>
    </source>
</evidence>
<evidence type="ECO:0000305" key="4"/>
<evidence type="ECO:0000312" key="5">
    <source>
        <dbReference type="HGNC" id="HGNC:28449"/>
    </source>
</evidence>
<evidence type="ECO:0007744" key="6">
    <source>
    </source>
</evidence>
<gene>
    <name evidence="5" type="primary">ZFTA</name>
    <name type="synonym">C11orf95</name>
</gene>
<protein>
    <recommendedName>
        <fullName evidence="4">Zinc finger translocation-associated protein</fullName>
        <shortName evidence="4">ZFTA</shortName>
    </recommendedName>
</protein>
<sequence>MEPGGDHRSRSSGGRGGPGPAVASARGRRLPPAGSSGSAEPEEDEGGQDLQLEGGALGSWGSAPLPSSRARGPASSGRKYSDHCEARASRPGKSRIPGRDHRRYYHDHWRLEYLMDFNPARHGMVCMVCGSSLATLKLSTIKRHIRQKHPYSLHWSPREKEVISNSWDAHLGLGACGEAEGLGVQGAEEEEEEEEEEEEEGAGVPACPPKGPGKAPAGGGCRRQRRGGPVAPRARRLRLSASRRAGGSRGLGARRLERRLKESLQNWFRAECLMDYDPRGNRLVCMACGRALPSLHLDDIRAHVLEVHPGSLGLSGPQRSALLQAWGGQPEALSELTQSPPGDDLAPQDLTGKSRDSASAAGAPSSQDLSPPDVKEEAGWVPERPGPAEEEEELEEGEGERAGVPGRSPRGRAHRRHPQERWRLEYLMELDGGRRGLVCGVCGGALASLKMSTIERHIRRRHPGSTRLGGPVQALIAREWSEKAAHLLALGPPRPESPQGPIPPGTAAASDEGGGDEEEEPEEEEEEWGDVPLSPGAPLERPAEEEEDEEDGQEPGGLALPPPPPPPPPPPPRSREQRRNYQPRWRGEYLMDYDGSRRGLVCMVCGGALATLKVSTIKRHILQVHPFSMDFTPEERQTILEAYEEAALRCYGHEGFGPPAPAPRDGGADLKSGAVCRA</sequence>
<keyword id="KW-0160">Chromosomal rearrangement</keyword>
<keyword id="KW-1017">Isopeptide bond</keyword>
<keyword id="KW-1267">Proteomics identification</keyword>
<keyword id="KW-1185">Reference proteome</keyword>
<keyword id="KW-0832">Ubl conjugation</keyword>